<protein>
    <recommendedName>
        <fullName evidence="1">CRISPR-associated endoribonuclease Cas2 1</fullName>
        <ecNumber evidence="1">3.1.-.-</ecNumber>
    </recommendedName>
</protein>
<gene>
    <name evidence="1" type="primary">cas2-1</name>
    <name type="ordered locus">Mhun_0734</name>
</gene>
<reference key="1">
    <citation type="journal article" date="2016" name="Stand. Genomic Sci.">
        <title>Complete genome sequence of Methanospirillum hungatei type strain JF1.</title>
        <authorList>
            <person name="Gunsalus R.P."/>
            <person name="Cook L.E."/>
            <person name="Crable B."/>
            <person name="Rohlin L."/>
            <person name="McDonald E."/>
            <person name="Mouttaki H."/>
            <person name="Sieber J.R."/>
            <person name="Poweleit N."/>
            <person name="Zhou H."/>
            <person name="Lapidus A.L."/>
            <person name="Daligault H.E."/>
            <person name="Land M."/>
            <person name="Gilna P."/>
            <person name="Ivanova N."/>
            <person name="Kyrpides N."/>
            <person name="Culley D.E."/>
            <person name="McInerney M.J."/>
        </authorList>
    </citation>
    <scope>NUCLEOTIDE SEQUENCE [LARGE SCALE GENOMIC DNA]</scope>
    <source>
        <strain>ATCC 27890 / DSM 864 / NBRC 100397 / JF-1</strain>
    </source>
</reference>
<accession>Q2FL79</accession>
<proteinExistence type="inferred from homology"/>
<dbReference type="EC" id="3.1.-.-" evidence="1"/>
<dbReference type="EMBL" id="CP000254">
    <property type="protein sequence ID" value="ABD40487.1"/>
    <property type="molecule type" value="Genomic_DNA"/>
</dbReference>
<dbReference type="RefSeq" id="WP_011447766.1">
    <property type="nucleotide sequence ID" value="NC_007796.1"/>
</dbReference>
<dbReference type="SMR" id="Q2FL79"/>
<dbReference type="STRING" id="323259.Mhun_0734"/>
<dbReference type="EnsemblBacteria" id="ABD40487">
    <property type="protein sequence ID" value="ABD40487"/>
    <property type="gene ID" value="Mhun_0734"/>
</dbReference>
<dbReference type="GeneID" id="3923161"/>
<dbReference type="KEGG" id="mhu:Mhun_0734"/>
<dbReference type="eggNOG" id="arCOG04194">
    <property type="taxonomic scope" value="Archaea"/>
</dbReference>
<dbReference type="HOGENOM" id="CLU_161124_2_0_2"/>
<dbReference type="InParanoid" id="Q2FL79"/>
<dbReference type="OrthoDB" id="75992at2157"/>
<dbReference type="Proteomes" id="UP000001941">
    <property type="component" value="Chromosome"/>
</dbReference>
<dbReference type="GO" id="GO:0046872">
    <property type="term" value="F:metal ion binding"/>
    <property type="evidence" value="ECO:0007669"/>
    <property type="project" value="UniProtKB-UniRule"/>
</dbReference>
<dbReference type="GO" id="GO:0004521">
    <property type="term" value="F:RNA endonuclease activity"/>
    <property type="evidence" value="ECO:0007669"/>
    <property type="project" value="InterPro"/>
</dbReference>
<dbReference type="GO" id="GO:0051607">
    <property type="term" value="P:defense response to virus"/>
    <property type="evidence" value="ECO:0007669"/>
    <property type="project" value="UniProtKB-UniRule"/>
</dbReference>
<dbReference type="GO" id="GO:0043571">
    <property type="term" value="P:maintenance of CRISPR repeat elements"/>
    <property type="evidence" value="ECO:0007669"/>
    <property type="project" value="UniProtKB-UniRule"/>
</dbReference>
<dbReference type="CDD" id="cd09725">
    <property type="entry name" value="Cas2_I_II_III"/>
    <property type="match status" value="1"/>
</dbReference>
<dbReference type="Gene3D" id="3.30.70.240">
    <property type="match status" value="1"/>
</dbReference>
<dbReference type="HAMAP" id="MF_01471">
    <property type="entry name" value="Cas2"/>
    <property type="match status" value="1"/>
</dbReference>
<dbReference type="InterPro" id="IPR021127">
    <property type="entry name" value="CRISPR_associated_Cas2"/>
</dbReference>
<dbReference type="InterPro" id="IPR019199">
    <property type="entry name" value="Virulence_VapD/CRISPR_Cas2"/>
</dbReference>
<dbReference type="NCBIfam" id="TIGR01573">
    <property type="entry name" value="cas2"/>
    <property type="match status" value="1"/>
</dbReference>
<dbReference type="PANTHER" id="PTHR34405">
    <property type="entry name" value="CRISPR-ASSOCIATED ENDORIBONUCLEASE CAS2"/>
    <property type="match status" value="1"/>
</dbReference>
<dbReference type="PANTHER" id="PTHR34405:SF3">
    <property type="entry name" value="CRISPR-ASSOCIATED ENDORIBONUCLEASE CAS2 3"/>
    <property type="match status" value="1"/>
</dbReference>
<dbReference type="Pfam" id="PF09827">
    <property type="entry name" value="CRISPR_Cas2"/>
    <property type="match status" value="1"/>
</dbReference>
<dbReference type="SUPFAM" id="SSF143430">
    <property type="entry name" value="TTP0101/SSO1404-like"/>
    <property type="match status" value="1"/>
</dbReference>
<comment type="function">
    <text evidence="1">CRISPR (clustered regularly interspaced short palindromic repeat), is an adaptive immune system that provides protection against mobile genetic elements (viruses, transposable elements and conjugative plasmids). CRISPR clusters contain sequences complementary to antecedent mobile elements and target invading nucleic acids. CRISPR clusters are transcribed and processed into CRISPR RNA (crRNA). Functions as a ssRNA-specific endoribonuclease. Involved in the integration of spacer DNA into the CRISPR cassette.</text>
</comment>
<comment type="cofactor">
    <cofactor evidence="1">
        <name>Mg(2+)</name>
        <dbReference type="ChEBI" id="CHEBI:18420"/>
    </cofactor>
</comment>
<comment type="subunit">
    <text evidence="1">Homodimer, forms a heterotetramer with a Cas1 homodimer.</text>
</comment>
<comment type="similarity">
    <text evidence="1">Belongs to the CRISPR-associated endoribonuclease Cas2 protein family.</text>
</comment>
<organism>
    <name type="scientific">Methanospirillum hungatei JF-1 (strain ATCC 27890 / DSM 864 / NBRC 100397 / JF-1)</name>
    <dbReference type="NCBI Taxonomy" id="323259"/>
    <lineage>
        <taxon>Archaea</taxon>
        <taxon>Methanobacteriati</taxon>
        <taxon>Methanobacteriota</taxon>
        <taxon>Stenosarchaea group</taxon>
        <taxon>Methanomicrobia</taxon>
        <taxon>Methanomicrobiales</taxon>
        <taxon>Methanospirillaceae</taxon>
        <taxon>Methanospirillum</taxon>
    </lineage>
</organism>
<evidence type="ECO:0000255" key="1">
    <source>
        <dbReference type="HAMAP-Rule" id="MF_01471"/>
    </source>
</evidence>
<name>CAS2A_METHJ</name>
<keyword id="KW-0051">Antiviral defense</keyword>
<keyword id="KW-0255">Endonuclease</keyword>
<keyword id="KW-0378">Hydrolase</keyword>
<keyword id="KW-0460">Magnesium</keyword>
<keyword id="KW-0479">Metal-binding</keyword>
<keyword id="KW-0540">Nuclease</keyword>
<keyword id="KW-1185">Reference proteome</keyword>
<sequence>MTVKHLIVCYDVEKTKDRNKVIKVLEYYGLIRVQYSVFMGSLTETRLHQMNARIKREFTKPSIKILVIEVCNACMERALLVHEELPKVNRQFEVI</sequence>
<feature type="chain" id="PRO_0000417747" description="CRISPR-associated endoribonuclease Cas2 1">
    <location>
        <begin position="1"/>
        <end position="95"/>
    </location>
</feature>
<feature type="binding site" evidence="1">
    <location>
        <position position="11"/>
    </location>
    <ligand>
        <name>Mg(2+)</name>
        <dbReference type="ChEBI" id="CHEBI:18420"/>
        <note>catalytic</note>
    </ligand>
</feature>